<comment type="function">
    <text evidence="1">Involved in protein export.</text>
</comment>
<comment type="subunit">
    <text evidence="1">Part of the protein translocation apparatus. Forms a complex with SecD.</text>
</comment>
<comment type="subcellular location">
    <subcellularLocation>
        <location evidence="1">Cell membrane</location>
        <topology evidence="1">Multi-pass membrane protein</topology>
    </subcellularLocation>
</comment>
<comment type="similarity">
    <text evidence="1">Belongs to the SecD/SecF family. SecF subfamily.</text>
</comment>
<comment type="sequence caution" evidence="2">
    <conflict type="frameshift">
        <sequence resource="EMBL-CDS" id="AAB85346"/>
    </conflict>
</comment>
<protein>
    <recommendedName>
        <fullName evidence="1">Protein-export membrane protein SecF</fullName>
    </recommendedName>
</protein>
<reference key="1">
    <citation type="journal article" date="1997" name="J. Bacteriol.">
        <title>Complete genome sequence of Methanobacterium thermoautotrophicum deltaH: functional analysis and comparative genomics.</title>
        <authorList>
            <person name="Smith D.R."/>
            <person name="Doucette-Stamm L.A."/>
            <person name="Deloughery C."/>
            <person name="Lee H.-M."/>
            <person name="Dubois J."/>
            <person name="Aldredge T."/>
            <person name="Bashirzadeh R."/>
            <person name="Blakely D."/>
            <person name="Cook R."/>
            <person name="Gilbert K."/>
            <person name="Harrison D."/>
            <person name="Hoang L."/>
            <person name="Keagle P."/>
            <person name="Lumm W."/>
            <person name="Pothier B."/>
            <person name="Qiu D."/>
            <person name="Spadafora R."/>
            <person name="Vicare R."/>
            <person name="Wang Y."/>
            <person name="Wierzbowski J."/>
            <person name="Gibson R."/>
            <person name="Jiwani N."/>
            <person name="Caruso A."/>
            <person name="Bush D."/>
            <person name="Safer H."/>
            <person name="Patwell D."/>
            <person name="Prabhakar S."/>
            <person name="McDougall S."/>
            <person name="Shimer G."/>
            <person name="Goyal A."/>
            <person name="Pietrovski S."/>
            <person name="Church G.M."/>
            <person name="Daniels C.J."/>
            <person name="Mao J.-I."/>
            <person name="Rice P."/>
            <person name="Noelling J."/>
            <person name="Reeve J.N."/>
        </authorList>
    </citation>
    <scope>NUCLEOTIDE SEQUENCE [LARGE SCALE GENOMIC DNA]</scope>
    <source>
        <strain>ATCC 29096 / DSM 1053 / JCM 10044 / NBRC 100330 / Delta H</strain>
    </source>
</reference>
<accession>O26936</accession>
<name>SECF_METTH</name>
<keyword id="KW-1003">Cell membrane</keyword>
<keyword id="KW-0472">Membrane</keyword>
<keyword id="KW-0653">Protein transport</keyword>
<keyword id="KW-1185">Reference proteome</keyword>
<keyword id="KW-0811">Translocation</keyword>
<keyword id="KW-0812">Transmembrane</keyword>
<keyword id="KW-1133">Transmembrane helix</keyword>
<keyword id="KW-0813">Transport</keyword>
<evidence type="ECO:0000255" key="1">
    <source>
        <dbReference type="HAMAP-Rule" id="MF_01464"/>
    </source>
</evidence>
<evidence type="ECO:0000305" key="2"/>
<proteinExistence type="inferred from homology"/>
<sequence length="287" mass="30839">MGETLKVIVLIDRILKSYRPLIAIPAAITVIALLLVVFNGLNESVDLKGGALAELTLEKSVTQAELESLLREKLGTGDIKVLSIRGERVTVQFGTDMDVVKVSEALRGTATINSYKAVGPVLSKQAMNQIYWAIGFAFLFMSVTVFIIFRDPVPSLAVILAAASDIIIAVGGMSLFGIPLSLASVGAILMLIGYSVDTDILLTTRVLKRRKGTINERALGAMKTGVTMSIAAIASMAALYLVTVFVMPEARVLSDIAAVLIIGLLADILTTWLMNLGILRWYLEVRS</sequence>
<organism>
    <name type="scientific">Methanothermobacter thermautotrophicus (strain ATCC 29096 / DSM 1053 / JCM 10044 / NBRC 100330 / Delta H)</name>
    <name type="common">Methanobacterium thermoautotrophicum</name>
    <dbReference type="NCBI Taxonomy" id="187420"/>
    <lineage>
        <taxon>Archaea</taxon>
        <taxon>Methanobacteriati</taxon>
        <taxon>Methanobacteriota</taxon>
        <taxon>Methanomada group</taxon>
        <taxon>Methanobacteria</taxon>
        <taxon>Methanobacteriales</taxon>
        <taxon>Methanobacteriaceae</taxon>
        <taxon>Methanothermobacter</taxon>
    </lineage>
</organism>
<gene>
    <name evidence="1" type="primary">secF</name>
    <name type="ordered locus">MTH_848</name>
</gene>
<feature type="chain" id="PRO_0000412204" description="Protein-export membrane protein SecF">
    <location>
        <begin position="1"/>
        <end position="287"/>
    </location>
</feature>
<feature type="transmembrane region" description="Helical" evidence="1">
    <location>
        <begin position="21"/>
        <end position="41"/>
    </location>
</feature>
<feature type="transmembrane region" description="Helical" evidence="1">
    <location>
        <begin position="129"/>
        <end position="149"/>
    </location>
</feature>
<feature type="transmembrane region" description="Helical" evidence="1">
    <location>
        <begin position="158"/>
        <end position="178"/>
    </location>
</feature>
<feature type="transmembrane region" description="Helical" evidence="1">
    <location>
        <begin position="182"/>
        <end position="202"/>
    </location>
</feature>
<feature type="transmembrane region" description="Helical" evidence="1">
    <location>
        <begin position="226"/>
        <end position="246"/>
    </location>
</feature>
<feature type="transmembrane region" description="Helical" evidence="1">
    <location>
        <begin position="259"/>
        <end position="279"/>
    </location>
</feature>
<dbReference type="EMBL" id="AE000666">
    <property type="protein sequence ID" value="AAB85346.1"/>
    <property type="status" value="ALT_FRAME"/>
    <property type="molecule type" value="Genomic_DNA"/>
</dbReference>
<dbReference type="PIR" id="B69213">
    <property type="entry name" value="B69213"/>
</dbReference>
<dbReference type="SMR" id="O26936"/>
<dbReference type="FunCoup" id="O26936">
    <property type="interactions" value="7"/>
</dbReference>
<dbReference type="STRING" id="187420.MTH_848"/>
<dbReference type="PaxDb" id="187420-MTH_848"/>
<dbReference type="EnsemblBacteria" id="AAB85346">
    <property type="protein sequence ID" value="AAB85346"/>
    <property type="gene ID" value="MTH_848"/>
</dbReference>
<dbReference type="KEGG" id="mth:MTH_848"/>
<dbReference type="PATRIC" id="fig|187420.15.peg.832"/>
<dbReference type="HOGENOM" id="CLU_060478_0_0_2"/>
<dbReference type="InParanoid" id="O26936"/>
<dbReference type="Proteomes" id="UP000005223">
    <property type="component" value="Chromosome"/>
</dbReference>
<dbReference type="GO" id="GO:0005886">
    <property type="term" value="C:plasma membrane"/>
    <property type="evidence" value="ECO:0007669"/>
    <property type="project" value="UniProtKB-SubCell"/>
</dbReference>
<dbReference type="GO" id="GO:0065002">
    <property type="term" value="P:intracellular protein transmembrane transport"/>
    <property type="evidence" value="ECO:0007669"/>
    <property type="project" value="UniProtKB-UniRule"/>
</dbReference>
<dbReference type="GO" id="GO:0006605">
    <property type="term" value="P:protein targeting"/>
    <property type="evidence" value="ECO:0007669"/>
    <property type="project" value="UniProtKB-UniRule"/>
</dbReference>
<dbReference type="Gene3D" id="1.20.1640.10">
    <property type="entry name" value="Multidrug efflux transporter AcrB transmembrane domain"/>
    <property type="match status" value="1"/>
</dbReference>
<dbReference type="HAMAP" id="MF_01464_A">
    <property type="entry name" value="SecF_A"/>
    <property type="match status" value="1"/>
</dbReference>
<dbReference type="InterPro" id="IPR022813">
    <property type="entry name" value="SecD/SecF_arch_bac"/>
</dbReference>
<dbReference type="InterPro" id="IPR048634">
    <property type="entry name" value="SecD_SecF_C"/>
</dbReference>
<dbReference type="InterPro" id="IPR024921">
    <property type="entry name" value="SecF_arc"/>
</dbReference>
<dbReference type="NCBIfam" id="NF006353">
    <property type="entry name" value="PRK08578.1-1"/>
    <property type="match status" value="1"/>
</dbReference>
<dbReference type="PANTHER" id="PTHR30081:SF8">
    <property type="entry name" value="PROTEIN TRANSLOCASE SUBUNIT SECF"/>
    <property type="match status" value="1"/>
</dbReference>
<dbReference type="PANTHER" id="PTHR30081">
    <property type="entry name" value="PROTEIN-EXPORT MEMBRANE PROTEIN SEC"/>
    <property type="match status" value="1"/>
</dbReference>
<dbReference type="Pfam" id="PF02355">
    <property type="entry name" value="SecD_SecF_C"/>
    <property type="match status" value="1"/>
</dbReference>
<dbReference type="SUPFAM" id="SSF82866">
    <property type="entry name" value="Multidrug efflux transporter AcrB transmembrane domain"/>
    <property type="match status" value="1"/>
</dbReference>